<organism>
    <name type="scientific">Talaromyces funiculosus</name>
    <name type="common">Fruitlet core rot fungus</name>
    <name type="synonym">Penicillium funiculosum</name>
    <dbReference type="NCBI Taxonomy" id="28572"/>
    <lineage>
        <taxon>Eukaryota</taxon>
        <taxon>Fungi</taxon>
        <taxon>Dikarya</taxon>
        <taxon>Ascomycota</taxon>
        <taxon>Pezizomycotina</taxon>
        <taxon>Eurotiomycetes</taxon>
        <taxon>Eurotiomycetidae</taxon>
        <taxon>Eurotiales</taxon>
        <taxon>Trichocomaceae</taxon>
        <taxon>Talaromyces</taxon>
        <taxon>Talaromyces sect. Talaromyces</taxon>
    </lineage>
</organism>
<comment type="function">
    <text>Endo-1,4-beta-xylanase involved in the hydrolysis of xylan, a major structural heterogeneous polysaccharide found in plant biomass representing the second most abundant polysaccharide in the biosphere, after cellulose.</text>
</comment>
<comment type="catalytic activity">
    <reaction evidence="8 9">
        <text>Endohydrolysis of (1-&gt;4)-beta-D-xylosidic linkages in xylans.</text>
        <dbReference type="EC" id="3.2.1.8"/>
    </reaction>
</comment>
<comment type="activity regulation">
    <text evidence="8 9">Significantly inhibited by the wheat xylanase inhibiting protein I (XIP-I) and the proteinaceous endoxylanase Triticum aestivum xylanase inhibitors I (TAXI-I), but not TAXI-II.</text>
</comment>
<comment type="biophysicochemical properties">
    <kinetics>
        <KM evidence="8 9">22 mg/ml for birchwood xylan</KM>
        <KM evidence="8 9">29 mg/ml for insoluble fractions of wheat arabinoxylans</KM>
        <Vmax evidence="8 9">506.0 umol/min/mg enzyme toward birchwood xylan</Vmax>
        <Vmax evidence="8 9">1080.0 umol/min/mg enzyme toward insoluble fractions of wheat arabinoxylans</Vmax>
    </kinetics>
    <phDependence>
        <text evidence="8 9">Optimum pH is 3.7-4.7 for birchwood xylan.</text>
    </phDependence>
</comment>
<comment type="pathway">
    <text>Glycan degradation; xylan degradation.</text>
</comment>
<comment type="subcellular location">
    <subcellularLocation>
        <location>Secreted</location>
    </subcellularLocation>
</comment>
<comment type="similarity">
    <text evidence="10">Belongs to the glycosyl hydrolase 11 (cellulase G) family.</text>
</comment>
<accession>Q8J0K5</accession>
<dbReference type="EC" id="3.2.1.8"/>
<dbReference type="EMBL" id="AJ489605">
    <property type="protein sequence ID" value="CAD33900.1"/>
    <property type="molecule type" value="Genomic_DNA"/>
</dbReference>
<dbReference type="SMR" id="Q8J0K5"/>
<dbReference type="CAZy" id="CBM1">
    <property type="family name" value="Carbohydrate-Binding Module Family 1"/>
</dbReference>
<dbReference type="CAZy" id="GH11">
    <property type="family name" value="Glycoside Hydrolase Family 11"/>
</dbReference>
<dbReference type="GlyCosmos" id="Q8J0K5">
    <property type="glycosylation" value="1 site, No reported glycans"/>
</dbReference>
<dbReference type="BRENDA" id="3.2.1.8">
    <property type="organism ID" value="4616"/>
</dbReference>
<dbReference type="UniPathway" id="UPA00114"/>
<dbReference type="GO" id="GO:0005576">
    <property type="term" value="C:extracellular region"/>
    <property type="evidence" value="ECO:0007669"/>
    <property type="project" value="UniProtKB-SubCell"/>
</dbReference>
<dbReference type="GO" id="GO:0030248">
    <property type="term" value="F:cellulose binding"/>
    <property type="evidence" value="ECO:0007669"/>
    <property type="project" value="InterPro"/>
</dbReference>
<dbReference type="GO" id="GO:0031176">
    <property type="term" value="F:endo-1,4-beta-xylanase activity"/>
    <property type="evidence" value="ECO:0007669"/>
    <property type="project" value="UniProtKB-EC"/>
</dbReference>
<dbReference type="GO" id="GO:0045493">
    <property type="term" value="P:xylan catabolic process"/>
    <property type="evidence" value="ECO:0007669"/>
    <property type="project" value="UniProtKB-UniPathway"/>
</dbReference>
<dbReference type="FunFam" id="2.60.120.180:FF:000002">
    <property type="entry name" value="Endo-1,4-beta-xylanase A"/>
    <property type="match status" value="1"/>
</dbReference>
<dbReference type="Gene3D" id="2.60.120.180">
    <property type="match status" value="1"/>
</dbReference>
<dbReference type="InterPro" id="IPR035971">
    <property type="entry name" value="CBD_sf"/>
</dbReference>
<dbReference type="InterPro" id="IPR000254">
    <property type="entry name" value="Cellulose-bd_dom_fun"/>
</dbReference>
<dbReference type="InterPro" id="IPR013320">
    <property type="entry name" value="ConA-like_dom_sf"/>
</dbReference>
<dbReference type="InterPro" id="IPR013319">
    <property type="entry name" value="GH11/12"/>
</dbReference>
<dbReference type="InterPro" id="IPR018208">
    <property type="entry name" value="GH11_AS_1"/>
</dbReference>
<dbReference type="InterPro" id="IPR033123">
    <property type="entry name" value="GH11_dom"/>
</dbReference>
<dbReference type="InterPro" id="IPR001137">
    <property type="entry name" value="Glyco_hydro_11"/>
</dbReference>
<dbReference type="PANTHER" id="PTHR46828:SF4">
    <property type="entry name" value="ENDO-1,4-BETA-XYLANASE"/>
    <property type="match status" value="1"/>
</dbReference>
<dbReference type="PANTHER" id="PTHR46828">
    <property type="entry name" value="ENDO-1,4-BETA-XYLANASE A-RELATED"/>
    <property type="match status" value="1"/>
</dbReference>
<dbReference type="Pfam" id="PF00734">
    <property type="entry name" value="CBM_1"/>
    <property type="match status" value="1"/>
</dbReference>
<dbReference type="Pfam" id="PF00457">
    <property type="entry name" value="Glyco_hydro_11"/>
    <property type="match status" value="1"/>
</dbReference>
<dbReference type="PRINTS" id="PR00911">
    <property type="entry name" value="GLHYDRLASE11"/>
</dbReference>
<dbReference type="SMART" id="SM00236">
    <property type="entry name" value="fCBD"/>
    <property type="match status" value="1"/>
</dbReference>
<dbReference type="SUPFAM" id="SSF57180">
    <property type="entry name" value="Cellulose-binding domain"/>
    <property type="match status" value="1"/>
</dbReference>
<dbReference type="SUPFAM" id="SSF49899">
    <property type="entry name" value="Concanavalin A-like lectins/glucanases"/>
    <property type="match status" value="1"/>
</dbReference>
<dbReference type="PROSITE" id="PS00562">
    <property type="entry name" value="CBM1_1"/>
    <property type="match status" value="1"/>
</dbReference>
<dbReference type="PROSITE" id="PS51164">
    <property type="entry name" value="CBM1_2"/>
    <property type="match status" value="1"/>
</dbReference>
<dbReference type="PROSITE" id="PS00776">
    <property type="entry name" value="GH11_1"/>
    <property type="match status" value="1"/>
</dbReference>
<dbReference type="PROSITE" id="PS51761">
    <property type="entry name" value="GH11_3"/>
    <property type="match status" value="1"/>
</dbReference>
<gene>
    <name type="primary">xynB</name>
</gene>
<protein>
    <recommendedName>
        <fullName>Endo-1,4-beta-xylanase B</fullName>
        <shortName>Xylanase B</shortName>
        <ecNumber>3.2.1.8</ecNumber>
    </recommendedName>
    <alternativeName>
        <fullName>1,4-beta-D-xylan xylanohydrolase B</fullName>
    </alternativeName>
</protein>
<feature type="signal peptide" evidence="7">
    <location>
        <begin position="1"/>
        <end position="39"/>
    </location>
</feature>
<feature type="chain" id="PRO_5000068593" description="Endo-1,4-beta-xylanase B">
    <location>
        <begin position="40"/>
        <end position="282"/>
    </location>
</feature>
<feature type="domain" description="GH11" evidence="4">
    <location>
        <begin position="40"/>
        <end position="219"/>
    </location>
</feature>
<feature type="domain" description="CBM1" evidence="3">
    <location>
        <begin position="246"/>
        <end position="282"/>
    </location>
</feature>
<feature type="region of interest" description="Disordered" evidence="6">
    <location>
        <begin position="214"/>
        <end position="245"/>
    </location>
</feature>
<feature type="compositionally biased region" description="Low complexity" evidence="6">
    <location>
        <begin position="227"/>
        <end position="243"/>
    </location>
</feature>
<feature type="active site" description="Nucleophile" evidence="5">
    <location>
        <position position="117"/>
    </location>
</feature>
<feature type="active site" description="Proton donor" evidence="1">
    <location>
        <position position="206"/>
    </location>
</feature>
<feature type="glycosylation site" description="N-linked (GlcNAc...) asparagine" evidence="2">
    <location>
        <position position="33"/>
    </location>
</feature>
<keyword id="KW-0119">Carbohydrate metabolism</keyword>
<keyword id="KW-0903">Direct protein sequencing</keyword>
<keyword id="KW-0325">Glycoprotein</keyword>
<keyword id="KW-0326">Glycosidase</keyword>
<keyword id="KW-0378">Hydrolase</keyword>
<keyword id="KW-0624">Polysaccharide degradation</keyword>
<keyword id="KW-0964">Secreted</keyword>
<keyword id="KW-0732">Signal</keyword>
<keyword id="KW-0858">Xylan degradation</keyword>
<proteinExistence type="evidence at protein level"/>
<reference key="1">
    <citation type="journal article" date="2003" name="Appl. Microbiol. Biotechnol.">
        <title>Comparison of modular and non-modular xylanases as carrier proteins for the efficient secretion of heterologous proteins from Penicillium funiculosum.</title>
        <authorList>
            <person name="Alcocer M.J."/>
            <person name="Furniss C.S.M."/>
            <person name="Kroon P.A."/>
            <person name="Campbell M."/>
            <person name="Archer D.B."/>
        </authorList>
    </citation>
    <scope>NUCLEOTIDE SEQUENCE [GENOMIC DNA]</scope>
    <scope>PROTEIN SEQUENCE OF 40-49; 135-153 AND 162-170</scope>
    <source>
        <strain>IMI 134756</strain>
    </source>
</reference>
<reference key="2">
    <citation type="journal article" date="2004" name="Biochim. Biophys. Acta">
        <title>The inhibition specificity of recombinant Penicillium funiculosum xylanase B towards wheat proteinaceous inhibitors.</title>
        <authorList>
            <person name="Brutus A."/>
            <person name="Villard C."/>
            <person name="Durand A."/>
            <person name="Tahir T."/>
            <person name="Furniss C."/>
            <person name="Puigserver A."/>
            <person name="Juge N."/>
            <person name="Giardina T."/>
        </authorList>
    </citation>
    <scope>CATALYTIC ACTIVITY</scope>
    <scope>BIOPHYSICOCHEMICAL PROPERTIES</scope>
    <scope>ACTIVITY REGULATION</scope>
</reference>
<reference key="3">
    <citation type="journal article" date="2005" name="J. Sci. Food Agric.">
        <title>The substrate specificity and susceptibility to wheat inhibitor proteins of Penicillium funiculosum xylanases from a commercial enzyme preparation.</title>
        <authorList>
            <person name="Furniss C.S.M."/>
            <person name="Williamson G."/>
            <person name="Kroon P.A."/>
        </authorList>
        <dbReference type="AGRICOLA" id="IND43674834"/>
    </citation>
    <scope>CATALYTIC ACTIVITY</scope>
    <scope>BIOPHYSICOCHEMICAL PROPERTIES</scope>
    <scope>ACTIVITY REGULATION</scope>
    <source>
        <strain>IMI 134756</strain>
    </source>
</reference>
<name>XYNB_TALFU</name>
<sequence>MGISSILLSALIAGGALALPAAEPVSFDIRDENITLARRAEAINYNQDYIASGANVQYSPNMAAGSFSINYNTQGDFVVGLGWQPGDANPITYSGSFSASGVGILAVYGWSTNPLVEYYVMEVHDGYQTAGTHKGTVTTDGGTYDIWEHQQVNQPSILGTSTFNQYISIRQSPRTSGTVTVQNHFNAWAQAGMNLGTLNYQVMAVESWSGSGSGQISLSKGTGGGSTTTTPTGPTSTSTAPSSGGTGAAQWGQCGGIGWTGPTTCVAPYTCKYENAYYSQCQ</sequence>
<evidence type="ECO:0000250" key="1"/>
<evidence type="ECO:0000255" key="2"/>
<evidence type="ECO:0000255" key="3">
    <source>
        <dbReference type="PROSITE-ProRule" id="PRU00597"/>
    </source>
</evidence>
<evidence type="ECO:0000255" key="4">
    <source>
        <dbReference type="PROSITE-ProRule" id="PRU01097"/>
    </source>
</evidence>
<evidence type="ECO:0000255" key="5">
    <source>
        <dbReference type="PROSITE-ProRule" id="PRU10062"/>
    </source>
</evidence>
<evidence type="ECO:0000256" key="6">
    <source>
        <dbReference type="SAM" id="MobiDB-lite"/>
    </source>
</evidence>
<evidence type="ECO:0000269" key="7">
    <source>
    </source>
</evidence>
<evidence type="ECO:0000269" key="8">
    <source>
    </source>
</evidence>
<evidence type="ECO:0000269" key="9">
    <source ref="3"/>
</evidence>
<evidence type="ECO:0000305" key="10"/>